<protein>
    <recommendedName>
        <fullName evidence="1">Large ribosomal subunit protein uL24</fullName>
    </recommendedName>
    <alternativeName>
        <fullName evidence="2">50S ribosomal protein L24</fullName>
    </alternativeName>
</protein>
<name>RL24_GEOSL</name>
<evidence type="ECO:0000255" key="1">
    <source>
        <dbReference type="HAMAP-Rule" id="MF_01326"/>
    </source>
</evidence>
<evidence type="ECO:0000305" key="2"/>
<sequence>MLDKKFHIKKGDTVSVVTGKDKSKTGTVLRILPKRDGVLVEGLNIVKRHTRARGNEPGGIVEKEAPLHVSNVMLYCGKCEKPVRAKKAILEDGKKVRVCVKCGEAFDK</sequence>
<accession>P60740</accession>
<organism>
    <name type="scientific">Geobacter sulfurreducens (strain ATCC 51573 / DSM 12127 / PCA)</name>
    <dbReference type="NCBI Taxonomy" id="243231"/>
    <lineage>
        <taxon>Bacteria</taxon>
        <taxon>Pseudomonadati</taxon>
        <taxon>Thermodesulfobacteriota</taxon>
        <taxon>Desulfuromonadia</taxon>
        <taxon>Geobacterales</taxon>
        <taxon>Geobacteraceae</taxon>
        <taxon>Geobacter</taxon>
    </lineage>
</organism>
<gene>
    <name evidence="1" type="primary">rplX</name>
    <name type="ordered locus">GSU2846</name>
</gene>
<comment type="function">
    <text evidence="1">One of two assembly initiator proteins, it binds directly to the 5'-end of the 23S rRNA, where it nucleates assembly of the 50S subunit.</text>
</comment>
<comment type="function">
    <text evidence="1">One of the proteins that surrounds the polypeptide exit tunnel on the outside of the subunit.</text>
</comment>
<comment type="subunit">
    <text evidence="1">Part of the 50S ribosomal subunit.</text>
</comment>
<comment type="similarity">
    <text evidence="1">Belongs to the universal ribosomal protein uL24 family.</text>
</comment>
<proteinExistence type="inferred from homology"/>
<keyword id="KW-1185">Reference proteome</keyword>
<keyword id="KW-0687">Ribonucleoprotein</keyword>
<keyword id="KW-0689">Ribosomal protein</keyword>
<keyword id="KW-0694">RNA-binding</keyword>
<keyword id="KW-0699">rRNA-binding</keyword>
<reference key="1">
    <citation type="journal article" date="2003" name="Science">
        <title>Genome of Geobacter sulfurreducens: metal reduction in subsurface environments.</title>
        <authorList>
            <person name="Methe B.A."/>
            <person name="Nelson K.E."/>
            <person name="Eisen J.A."/>
            <person name="Paulsen I.T."/>
            <person name="Nelson W.C."/>
            <person name="Heidelberg J.F."/>
            <person name="Wu D."/>
            <person name="Wu M."/>
            <person name="Ward N.L."/>
            <person name="Beanan M.J."/>
            <person name="Dodson R.J."/>
            <person name="Madupu R."/>
            <person name="Brinkac L.M."/>
            <person name="Daugherty S.C."/>
            <person name="DeBoy R.T."/>
            <person name="Durkin A.S."/>
            <person name="Gwinn M.L."/>
            <person name="Kolonay J.F."/>
            <person name="Sullivan S.A."/>
            <person name="Haft D.H."/>
            <person name="Selengut J."/>
            <person name="Davidsen T.M."/>
            <person name="Zafar N."/>
            <person name="White O."/>
            <person name="Tran B."/>
            <person name="Romero C."/>
            <person name="Forberger H.A."/>
            <person name="Weidman J.F."/>
            <person name="Khouri H.M."/>
            <person name="Feldblyum T.V."/>
            <person name="Utterback T.R."/>
            <person name="Van Aken S.E."/>
            <person name="Lovley D.R."/>
            <person name="Fraser C.M."/>
        </authorList>
    </citation>
    <scope>NUCLEOTIDE SEQUENCE [LARGE SCALE GENOMIC DNA]</scope>
    <source>
        <strain>ATCC 51573 / DSM 12127 / PCA</strain>
    </source>
</reference>
<feature type="chain" id="PRO_0000130659" description="Large ribosomal subunit protein uL24">
    <location>
        <begin position="1"/>
        <end position="108"/>
    </location>
</feature>
<dbReference type="EMBL" id="AE017180">
    <property type="protein sequence ID" value="AAR36239.1"/>
    <property type="molecule type" value="Genomic_DNA"/>
</dbReference>
<dbReference type="RefSeq" id="NP_953889.1">
    <property type="nucleotide sequence ID" value="NC_002939.5"/>
</dbReference>
<dbReference type="RefSeq" id="WP_010943475.1">
    <property type="nucleotide sequence ID" value="NC_002939.5"/>
</dbReference>
<dbReference type="SMR" id="P60740"/>
<dbReference type="FunCoup" id="P60740">
    <property type="interactions" value="646"/>
</dbReference>
<dbReference type="STRING" id="243231.GSU2846"/>
<dbReference type="EnsemblBacteria" id="AAR36239">
    <property type="protein sequence ID" value="AAR36239"/>
    <property type="gene ID" value="GSU2846"/>
</dbReference>
<dbReference type="KEGG" id="gsu:GSU2846"/>
<dbReference type="PATRIC" id="fig|243231.5.peg.2872"/>
<dbReference type="eggNOG" id="COG0198">
    <property type="taxonomic scope" value="Bacteria"/>
</dbReference>
<dbReference type="HOGENOM" id="CLU_093315_2_3_7"/>
<dbReference type="InParanoid" id="P60740"/>
<dbReference type="OrthoDB" id="9807419at2"/>
<dbReference type="Proteomes" id="UP000000577">
    <property type="component" value="Chromosome"/>
</dbReference>
<dbReference type="GO" id="GO:0022625">
    <property type="term" value="C:cytosolic large ribosomal subunit"/>
    <property type="evidence" value="ECO:0000318"/>
    <property type="project" value="GO_Central"/>
</dbReference>
<dbReference type="GO" id="GO:0019843">
    <property type="term" value="F:rRNA binding"/>
    <property type="evidence" value="ECO:0007669"/>
    <property type="project" value="UniProtKB-UniRule"/>
</dbReference>
<dbReference type="GO" id="GO:0003735">
    <property type="term" value="F:structural constituent of ribosome"/>
    <property type="evidence" value="ECO:0007669"/>
    <property type="project" value="InterPro"/>
</dbReference>
<dbReference type="GO" id="GO:0006412">
    <property type="term" value="P:translation"/>
    <property type="evidence" value="ECO:0000318"/>
    <property type="project" value="GO_Central"/>
</dbReference>
<dbReference type="CDD" id="cd06089">
    <property type="entry name" value="KOW_RPL26"/>
    <property type="match status" value="1"/>
</dbReference>
<dbReference type="FunFam" id="2.30.30.30:FF:000004">
    <property type="entry name" value="50S ribosomal protein L24"/>
    <property type="match status" value="1"/>
</dbReference>
<dbReference type="Gene3D" id="2.30.30.30">
    <property type="match status" value="1"/>
</dbReference>
<dbReference type="HAMAP" id="MF_01326_B">
    <property type="entry name" value="Ribosomal_uL24_B"/>
    <property type="match status" value="1"/>
</dbReference>
<dbReference type="InterPro" id="IPR005824">
    <property type="entry name" value="KOW"/>
</dbReference>
<dbReference type="InterPro" id="IPR014722">
    <property type="entry name" value="Rib_uL2_dom2"/>
</dbReference>
<dbReference type="InterPro" id="IPR003256">
    <property type="entry name" value="Ribosomal_uL24"/>
</dbReference>
<dbReference type="InterPro" id="IPR041988">
    <property type="entry name" value="Ribosomal_uL24_KOW"/>
</dbReference>
<dbReference type="InterPro" id="IPR008991">
    <property type="entry name" value="Translation_prot_SH3-like_sf"/>
</dbReference>
<dbReference type="NCBIfam" id="TIGR01079">
    <property type="entry name" value="rplX_bact"/>
    <property type="match status" value="1"/>
</dbReference>
<dbReference type="PANTHER" id="PTHR12903">
    <property type="entry name" value="MITOCHONDRIAL RIBOSOMAL PROTEIN L24"/>
    <property type="match status" value="1"/>
</dbReference>
<dbReference type="Pfam" id="PF00467">
    <property type="entry name" value="KOW"/>
    <property type="match status" value="1"/>
</dbReference>
<dbReference type="Pfam" id="PF17136">
    <property type="entry name" value="ribosomal_L24"/>
    <property type="match status" value="1"/>
</dbReference>
<dbReference type="SMART" id="SM00739">
    <property type="entry name" value="KOW"/>
    <property type="match status" value="1"/>
</dbReference>
<dbReference type="SUPFAM" id="SSF50104">
    <property type="entry name" value="Translation proteins SH3-like domain"/>
    <property type="match status" value="1"/>
</dbReference>